<accession>A2C3H1</accession>
<reference key="1">
    <citation type="journal article" date="2007" name="PLoS Genet.">
        <title>Patterns and implications of gene gain and loss in the evolution of Prochlorococcus.</title>
        <authorList>
            <person name="Kettler G.C."/>
            <person name="Martiny A.C."/>
            <person name="Huang K."/>
            <person name="Zucker J."/>
            <person name="Coleman M.L."/>
            <person name="Rodrigue S."/>
            <person name="Chen F."/>
            <person name="Lapidus A."/>
            <person name="Ferriera S."/>
            <person name="Johnson J."/>
            <person name="Steglich C."/>
            <person name="Church G.M."/>
            <person name="Richardson P."/>
            <person name="Chisholm S.W."/>
        </authorList>
    </citation>
    <scope>NUCLEOTIDE SEQUENCE [LARGE SCALE GENOMIC DNA]</scope>
    <source>
        <strain>NATL1A</strain>
    </source>
</reference>
<proteinExistence type="inferred from homology"/>
<name>PDXJ_PROM1</name>
<comment type="function">
    <text evidence="1">Catalyzes the complicated ring closure reaction between the two acyclic compounds 1-deoxy-D-xylulose-5-phosphate (DXP) and 3-amino-2-oxopropyl phosphate (1-amino-acetone-3-phosphate or AAP) to form pyridoxine 5'-phosphate (PNP) and inorganic phosphate.</text>
</comment>
<comment type="catalytic activity">
    <reaction evidence="1">
        <text>3-amino-2-oxopropyl phosphate + 1-deoxy-D-xylulose 5-phosphate = pyridoxine 5'-phosphate + phosphate + 2 H2O + H(+)</text>
        <dbReference type="Rhea" id="RHEA:15265"/>
        <dbReference type="ChEBI" id="CHEBI:15377"/>
        <dbReference type="ChEBI" id="CHEBI:15378"/>
        <dbReference type="ChEBI" id="CHEBI:43474"/>
        <dbReference type="ChEBI" id="CHEBI:57279"/>
        <dbReference type="ChEBI" id="CHEBI:57792"/>
        <dbReference type="ChEBI" id="CHEBI:58589"/>
        <dbReference type="EC" id="2.6.99.2"/>
    </reaction>
</comment>
<comment type="pathway">
    <text evidence="1">Cofactor biosynthesis; pyridoxine 5'-phosphate biosynthesis; pyridoxine 5'-phosphate from D-erythrose 4-phosphate: step 5/5.</text>
</comment>
<comment type="subunit">
    <text evidence="1">Homooctamer; tetramer of dimers.</text>
</comment>
<comment type="subcellular location">
    <subcellularLocation>
        <location evidence="1">Cytoplasm</location>
    </subcellularLocation>
</comment>
<comment type="similarity">
    <text evidence="1">Belongs to the PNP synthase family.</text>
</comment>
<keyword id="KW-0963">Cytoplasm</keyword>
<keyword id="KW-0664">Pyridoxine biosynthesis</keyword>
<keyword id="KW-0808">Transferase</keyword>
<dbReference type="EC" id="2.6.99.2" evidence="1"/>
<dbReference type="EMBL" id="CP000553">
    <property type="protein sequence ID" value="ABM76031.1"/>
    <property type="molecule type" value="Genomic_DNA"/>
</dbReference>
<dbReference type="RefSeq" id="WP_011824056.1">
    <property type="nucleotide sequence ID" value="NC_008819.1"/>
</dbReference>
<dbReference type="SMR" id="A2C3H1"/>
<dbReference type="KEGG" id="pme:NATL1_14741"/>
<dbReference type="eggNOG" id="COG0854">
    <property type="taxonomic scope" value="Bacteria"/>
</dbReference>
<dbReference type="HOGENOM" id="CLU_074563_0_0_3"/>
<dbReference type="UniPathway" id="UPA00244">
    <property type="reaction ID" value="UER00313"/>
</dbReference>
<dbReference type="Proteomes" id="UP000002592">
    <property type="component" value="Chromosome"/>
</dbReference>
<dbReference type="GO" id="GO:0005829">
    <property type="term" value="C:cytosol"/>
    <property type="evidence" value="ECO:0007669"/>
    <property type="project" value="TreeGrafter"/>
</dbReference>
<dbReference type="GO" id="GO:0033856">
    <property type="term" value="F:pyridoxine 5'-phosphate synthase activity"/>
    <property type="evidence" value="ECO:0007669"/>
    <property type="project" value="UniProtKB-EC"/>
</dbReference>
<dbReference type="GO" id="GO:0008615">
    <property type="term" value="P:pyridoxine biosynthetic process"/>
    <property type="evidence" value="ECO:0007669"/>
    <property type="project" value="UniProtKB-UniRule"/>
</dbReference>
<dbReference type="CDD" id="cd00003">
    <property type="entry name" value="PNPsynthase"/>
    <property type="match status" value="1"/>
</dbReference>
<dbReference type="Gene3D" id="3.20.20.70">
    <property type="entry name" value="Aldolase class I"/>
    <property type="match status" value="1"/>
</dbReference>
<dbReference type="HAMAP" id="MF_00279">
    <property type="entry name" value="PdxJ"/>
    <property type="match status" value="1"/>
</dbReference>
<dbReference type="InterPro" id="IPR013785">
    <property type="entry name" value="Aldolase_TIM"/>
</dbReference>
<dbReference type="InterPro" id="IPR004569">
    <property type="entry name" value="PyrdxlP_synth_PdxJ"/>
</dbReference>
<dbReference type="InterPro" id="IPR036130">
    <property type="entry name" value="Pyridoxine-5'_phos_synth"/>
</dbReference>
<dbReference type="NCBIfam" id="TIGR00559">
    <property type="entry name" value="pdxJ"/>
    <property type="match status" value="1"/>
</dbReference>
<dbReference type="NCBIfam" id="NF003625">
    <property type="entry name" value="PRK05265.1-3"/>
    <property type="match status" value="1"/>
</dbReference>
<dbReference type="NCBIfam" id="NF003627">
    <property type="entry name" value="PRK05265.1-5"/>
    <property type="match status" value="1"/>
</dbReference>
<dbReference type="PANTHER" id="PTHR30456">
    <property type="entry name" value="PYRIDOXINE 5'-PHOSPHATE SYNTHASE"/>
    <property type="match status" value="1"/>
</dbReference>
<dbReference type="PANTHER" id="PTHR30456:SF0">
    <property type="entry name" value="PYRIDOXINE 5'-PHOSPHATE SYNTHASE"/>
    <property type="match status" value="1"/>
</dbReference>
<dbReference type="Pfam" id="PF03740">
    <property type="entry name" value="PdxJ"/>
    <property type="match status" value="1"/>
</dbReference>
<dbReference type="SUPFAM" id="SSF63892">
    <property type="entry name" value="Pyridoxine 5'-phosphate synthase"/>
    <property type="match status" value="1"/>
</dbReference>
<organism>
    <name type="scientific">Prochlorococcus marinus (strain NATL1A)</name>
    <dbReference type="NCBI Taxonomy" id="167555"/>
    <lineage>
        <taxon>Bacteria</taxon>
        <taxon>Bacillati</taxon>
        <taxon>Cyanobacteriota</taxon>
        <taxon>Cyanophyceae</taxon>
        <taxon>Synechococcales</taxon>
        <taxon>Prochlorococcaceae</taxon>
        <taxon>Prochlorococcus</taxon>
    </lineage>
</organism>
<sequence length="245" mass="27208">MASLGVNIDHIANVREARKTFEPDPVKMVLLAELGGADGITVHLREDRRHIQDRDLNLLKETVHTRLNLEMAATEEMTSIALNLKPDMVTLVPEKREEVTTEGGLDVIKNKNKLKEIIQRLSGEDIPVSLFVDPVQAQLENCAEVKAAWIELHTGKYAITKNKARDLELSILKENTAKAKSYGLRVNAGHGLTYQNVEPIAAIEGIEELNIGHTIISRALSVGLSQAVKEMKSLIINPRKDNFLL</sequence>
<evidence type="ECO:0000255" key="1">
    <source>
        <dbReference type="HAMAP-Rule" id="MF_00279"/>
    </source>
</evidence>
<gene>
    <name evidence="1" type="primary">pdxJ</name>
    <name type="ordered locus">NATL1_14741</name>
</gene>
<protein>
    <recommendedName>
        <fullName evidence="1">Pyridoxine 5'-phosphate synthase</fullName>
        <shortName evidence="1">PNP synthase</shortName>
        <ecNumber evidence="1">2.6.99.2</ecNumber>
    </recommendedName>
</protein>
<feature type="chain" id="PRO_1000022386" description="Pyridoxine 5'-phosphate synthase">
    <location>
        <begin position="1"/>
        <end position="245"/>
    </location>
</feature>
<feature type="active site" description="Proton acceptor" evidence="1">
    <location>
        <position position="43"/>
    </location>
</feature>
<feature type="active site" description="Proton acceptor" evidence="1">
    <location>
        <position position="70"/>
    </location>
</feature>
<feature type="active site" description="Proton donor" evidence="1">
    <location>
        <position position="190"/>
    </location>
</feature>
<feature type="binding site" evidence="1">
    <location>
        <position position="7"/>
    </location>
    <ligand>
        <name>3-amino-2-oxopropyl phosphate</name>
        <dbReference type="ChEBI" id="CHEBI:57279"/>
    </ligand>
</feature>
<feature type="binding site" evidence="1">
    <location>
        <begin position="9"/>
        <end position="10"/>
    </location>
    <ligand>
        <name>1-deoxy-D-xylulose 5-phosphate</name>
        <dbReference type="ChEBI" id="CHEBI:57792"/>
    </ligand>
</feature>
<feature type="binding site" evidence="1">
    <location>
        <position position="18"/>
    </location>
    <ligand>
        <name>3-amino-2-oxopropyl phosphate</name>
        <dbReference type="ChEBI" id="CHEBI:57279"/>
    </ligand>
</feature>
<feature type="binding site" evidence="1">
    <location>
        <position position="45"/>
    </location>
    <ligand>
        <name>1-deoxy-D-xylulose 5-phosphate</name>
        <dbReference type="ChEBI" id="CHEBI:57792"/>
    </ligand>
</feature>
<feature type="binding site" evidence="1">
    <location>
        <position position="50"/>
    </location>
    <ligand>
        <name>1-deoxy-D-xylulose 5-phosphate</name>
        <dbReference type="ChEBI" id="CHEBI:57792"/>
    </ligand>
</feature>
<feature type="binding site" evidence="1">
    <location>
        <position position="100"/>
    </location>
    <ligand>
        <name>1-deoxy-D-xylulose 5-phosphate</name>
        <dbReference type="ChEBI" id="CHEBI:57792"/>
    </ligand>
</feature>
<feature type="binding site" evidence="1">
    <location>
        <position position="191"/>
    </location>
    <ligand>
        <name>3-amino-2-oxopropyl phosphate</name>
        <dbReference type="ChEBI" id="CHEBI:57279"/>
    </ligand>
</feature>
<feature type="binding site" evidence="1">
    <location>
        <begin position="212"/>
        <end position="213"/>
    </location>
    <ligand>
        <name>3-amino-2-oxopropyl phosphate</name>
        <dbReference type="ChEBI" id="CHEBI:57279"/>
    </ligand>
</feature>
<feature type="site" description="Transition state stabilizer" evidence="1">
    <location>
        <position position="151"/>
    </location>
</feature>